<accession>Q93N35</accession>
<name>CH60_BUCRM</name>
<comment type="function">
    <text evidence="1">Together with its co-chaperonin GroES, plays an essential role in assisting protein folding. The GroEL-GroES system forms a nano-cage that allows encapsulation of the non-native substrate proteins and provides a physical environment optimized to promote and accelerate protein folding.</text>
</comment>
<comment type="catalytic activity">
    <reaction evidence="1">
        <text>ATP + H2O + a folded polypeptide = ADP + phosphate + an unfolded polypeptide.</text>
        <dbReference type="EC" id="5.6.1.7"/>
    </reaction>
</comment>
<comment type="subunit">
    <text evidence="1">Forms a cylinder of 14 subunits composed of two heptameric rings stacked back-to-back. Interacts with the co-chaperonin GroES.</text>
</comment>
<comment type="subcellular location">
    <subcellularLocation>
        <location evidence="1">Cytoplasm</location>
    </subcellularLocation>
</comment>
<comment type="similarity">
    <text evidence="1">Belongs to the chaperonin (HSP60) family.</text>
</comment>
<protein>
    <recommendedName>
        <fullName evidence="1">Chaperonin GroEL</fullName>
        <ecNumber evidence="1">5.6.1.7</ecNumber>
    </recommendedName>
    <alternativeName>
        <fullName evidence="1">60 kDa chaperonin</fullName>
    </alternativeName>
    <alternativeName>
        <fullName evidence="1">Chaperonin-60</fullName>
        <shortName evidence="1">Cpn60</shortName>
    </alternativeName>
</protein>
<gene>
    <name evidence="1" type="primary">groEL</name>
    <name evidence="1" type="synonym">groL</name>
    <name type="synonym">symL</name>
</gene>
<proteinExistence type="inferred from homology"/>
<feature type="chain" id="PRO_0000063311" description="Chaperonin GroEL">
    <location>
        <begin position="1"/>
        <end position="548"/>
    </location>
</feature>
<feature type="region of interest" description="Disordered" evidence="2">
    <location>
        <begin position="525"/>
        <end position="548"/>
    </location>
</feature>
<feature type="compositionally biased region" description="Gly residues" evidence="2">
    <location>
        <begin position="539"/>
        <end position="548"/>
    </location>
</feature>
<feature type="binding site" evidence="1">
    <location>
        <begin position="30"/>
        <end position="33"/>
    </location>
    <ligand>
        <name>ATP</name>
        <dbReference type="ChEBI" id="CHEBI:30616"/>
    </ligand>
</feature>
<feature type="binding site" evidence="1">
    <location>
        <position position="51"/>
    </location>
    <ligand>
        <name>ATP</name>
        <dbReference type="ChEBI" id="CHEBI:30616"/>
    </ligand>
</feature>
<feature type="binding site" evidence="1">
    <location>
        <begin position="87"/>
        <end position="91"/>
    </location>
    <ligand>
        <name>ATP</name>
        <dbReference type="ChEBI" id="CHEBI:30616"/>
    </ligand>
</feature>
<feature type="binding site" evidence="1">
    <location>
        <position position="415"/>
    </location>
    <ligand>
        <name>ATP</name>
        <dbReference type="ChEBI" id="CHEBI:30616"/>
    </ligand>
</feature>
<feature type="binding site" evidence="1">
    <location>
        <begin position="479"/>
        <end position="481"/>
    </location>
    <ligand>
        <name>ATP</name>
        <dbReference type="ChEBI" id="CHEBI:30616"/>
    </ligand>
</feature>
<feature type="binding site" evidence="1">
    <location>
        <position position="495"/>
    </location>
    <ligand>
        <name>ATP</name>
        <dbReference type="ChEBI" id="CHEBI:30616"/>
    </ligand>
</feature>
<organism>
    <name type="scientific">Buchnera aphidicola subsp. Rhopalosiphum maidis</name>
    <dbReference type="NCBI Taxonomy" id="118109"/>
    <lineage>
        <taxon>Bacteria</taxon>
        <taxon>Pseudomonadati</taxon>
        <taxon>Pseudomonadota</taxon>
        <taxon>Gammaproteobacteria</taxon>
        <taxon>Enterobacterales</taxon>
        <taxon>Erwiniaceae</taxon>
        <taxon>Buchnera</taxon>
    </lineage>
</organism>
<evidence type="ECO:0000255" key="1">
    <source>
        <dbReference type="HAMAP-Rule" id="MF_00600"/>
    </source>
</evidence>
<evidence type="ECO:0000256" key="2">
    <source>
        <dbReference type="SAM" id="MobiDB-lite"/>
    </source>
</evidence>
<keyword id="KW-0067">ATP-binding</keyword>
<keyword id="KW-0143">Chaperone</keyword>
<keyword id="KW-0963">Cytoplasm</keyword>
<keyword id="KW-0413">Isomerase</keyword>
<keyword id="KW-0547">Nucleotide-binding</keyword>
<sequence>MAAKDEKFGNEARIKMLRGVNVLADAVKVTLGPKGRNVVLDKSFGAPSITKDGVSVAREIELEDKFENMGAQMVKEVASKANDAAGDGTTTATLLAQSIVNEGLKAVAAGMNPMDLKRGIDKAVISAVEELKNLSVPCSDSKAITQVGTISANADEKVGALIAEAMEKVGNDGVITVEEGTGLQNELEVVKGMQFDRGYLSPYFINKPETGVVELENPYILMADKKISNVREMLPILESVAKSGKPLLIISEDLEGEALATLVVNSMRGIVKVAAVKAPGFGDRRKAMLQDISVLTGGSVISEELAMDLEKSTLEDLGQAKRVVINKDTTTIIGGVGEKQAIQSRISQIRQEIQEATSDYDKEKLNERLAKLSGGVAVLKVGAATEVEMKEKKARVEDALHATRAAVEEGVVAGGGVALVRVAGKISNLRGHNEDQNVGIRVALRAMEAPLRQIVSNSGEEPSVVTNNVKDGKGNYGYNAATDEYGDMIDFGILDPTKVTRSALQYAASVAGLMITTECMVTDLPKEDKTSDASSSPAGGMGGMGGMM</sequence>
<reference key="1">
    <citation type="submission" date="2001-04" db="EMBL/GenBank/DDBJ databases">
        <title>Rhopalosiphum maidis endosymbiont GroEL-related molecular chaperonin SymL (symL) gene.</title>
        <authorList>
            <person name="Wu Y."/>
            <person name="Lin L."/>
            <person name="Cui X."/>
        </authorList>
    </citation>
    <scope>NUCLEOTIDE SEQUENCE [GENOMIC DNA]</scope>
</reference>
<dbReference type="EC" id="5.6.1.7" evidence="1"/>
<dbReference type="EMBL" id="AF387863">
    <property type="protein sequence ID" value="AAK62970.1"/>
    <property type="molecule type" value="Genomic_DNA"/>
</dbReference>
<dbReference type="SMR" id="Q93N35"/>
<dbReference type="GO" id="GO:0005737">
    <property type="term" value="C:cytoplasm"/>
    <property type="evidence" value="ECO:0007669"/>
    <property type="project" value="UniProtKB-SubCell"/>
</dbReference>
<dbReference type="GO" id="GO:0005524">
    <property type="term" value="F:ATP binding"/>
    <property type="evidence" value="ECO:0007669"/>
    <property type="project" value="UniProtKB-UniRule"/>
</dbReference>
<dbReference type="GO" id="GO:0140662">
    <property type="term" value="F:ATP-dependent protein folding chaperone"/>
    <property type="evidence" value="ECO:0007669"/>
    <property type="project" value="InterPro"/>
</dbReference>
<dbReference type="GO" id="GO:0016853">
    <property type="term" value="F:isomerase activity"/>
    <property type="evidence" value="ECO:0007669"/>
    <property type="project" value="UniProtKB-KW"/>
</dbReference>
<dbReference type="GO" id="GO:0051082">
    <property type="term" value="F:unfolded protein binding"/>
    <property type="evidence" value="ECO:0007669"/>
    <property type="project" value="UniProtKB-UniRule"/>
</dbReference>
<dbReference type="GO" id="GO:0042026">
    <property type="term" value="P:protein refolding"/>
    <property type="evidence" value="ECO:0007669"/>
    <property type="project" value="UniProtKB-UniRule"/>
</dbReference>
<dbReference type="CDD" id="cd03344">
    <property type="entry name" value="GroEL"/>
    <property type="match status" value="1"/>
</dbReference>
<dbReference type="FunFam" id="1.10.560.10:FF:000001">
    <property type="entry name" value="60 kDa chaperonin"/>
    <property type="match status" value="1"/>
</dbReference>
<dbReference type="FunFam" id="3.50.7.10:FF:000001">
    <property type="entry name" value="60 kDa chaperonin"/>
    <property type="match status" value="1"/>
</dbReference>
<dbReference type="Gene3D" id="3.50.7.10">
    <property type="entry name" value="GroEL"/>
    <property type="match status" value="1"/>
</dbReference>
<dbReference type="Gene3D" id="1.10.560.10">
    <property type="entry name" value="GroEL-like equatorial domain"/>
    <property type="match status" value="1"/>
</dbReference>
<dbReference type="Gene3D" id="3.30.260.10">
    <property type="entry name" value="TCP-1-like chaperonin intermediate domain"/>
    <property type="match status" value="1"/>
</dbReference>
<dbReference type="HAMAP" id="MF_00600">
    <property type="entry name" value="CH60"/>
    <property type="match status" value="1"/>
</dbReference>
<dbReference type="InterPro" id="IPR018370">
    <property type="entry name" value="Chaperonin_Cpn60_CS"/>
</dbReference>
<dbReference type="InterPro" id="IPR001844">
    <property type="entry name" value="Cpn60/GroEL"/>
</dbReference>
<dbReference type="InterPro" id="IPR002423">
    <property type="entry name" value="Cpn60/GroEL/TCP-1"/>
</dbReference>
<dbReference type="InterPro" id="IPR027409">
    <property type="entry name" value="GroEL-like_apical_dom_sf"/>
</dbReference>
<dbReference type="InterPro" id="IPR027413">
    <property type="entry name" value="GROEL-like_equatorial_sf"/>
</dbReference>
<dbReference type="InterPro" id="IPR027410">
    <property type="entry name" value="TCP-1-like_intermed_sf"/>
</dbReference>
<dbReference type="NCBIfam" id="TIGR02348">
    <property type="entry name" value="GroEL"/>
    <property type="match status" value="1"/>
</dbReference>
<dbReference type="NCBIfam" id="NF000592">
    <property type="entry name" value="PRK00013.1"/>
    <property type="match status" value="1"/>
</dbReference>
<dbReference type="NCBIfam" id="NF009487">
    <property type="entry name" value="PRK12849.1"/>
    <property type="match status" value="1"/>
</dbReference>
<dbReference type="NCBIfam" id="NF009488">
    <property type="entry name" value="PRK12850.1"/>
    <property type="match status" value="1"/>
</dbReference>
<dbReference type="NCBIfam" id="NF009489">
    <property type="entry name" value="PRK12851.1"/>
    <property type="match status" value="1"/>
</dbReference>
<dbReference type="PANTHER" id="PTHR45633">
    <property type="entry name" value="60 KDA HEAT SHOCK PROTEIN, MITOCHONDRIAL"/>
    <property type="match status" value="1"/>
</dbReference>
<dbReference type="Pfam" id="PF00118">
    <property type="entry name" value="Cpn60_TCP1"/>
    <property type="match status" value="1"/>
</dbReference>
<dbReference type="PRINTS" id="PR00298">
    <property type="entry name" value="CHAPERONIN60"/>
</dbReference>
<dbReference type="SUPFAM" id="SSF52029">
    <property type="entry name" value="GroEL apical domain-like"/>
    <property type="match status" value="1"/>
</dbReference>
<dbReference type="SUPFAM" id="SSF48592">
    <property type="entry name" value="GroEL equatorial domain-like"/>
    <property type="match status" value="1"/>
</dbReference>
<dbReference type="SUPFAM" id="SSF54849">
    <property type="entry name" value="GroEL-intermediate domain like"/>
    <property type="match status" value="1"/>
</dbReference>
<dbReference type="PROSITE" id="PS00296">
    <property type="entry name" value="CHAPERONINS_CPN60"/>
    <property type="match status" value="1"/>
</dbReference>